<reference key="1">
    <citation type="journal article" date="2002" name="Proc. Natl. Acad. Sci. U.S.A.">
        <title>Genome sequence of a serotype M3 strain of group A Streptococcus: phage-encoded toxins, the high-virulence phenotype, and clone emergence.</title>
        <authorList>
            <person name="Beres S.B."/>
            <person name="Sylva G.L."/>
            <person name="Barbian K.D."/>
            <person name="Lei B."/>
            <person name="Hoff J.S."/>
            <person name="Mammarella N.D."/>
            <person name="Liu M.-Y."/>
            <person name="Smoot J.C."/>
            <person name="Porcella S.F."/>
            <person name="Parkins L.D."/>
            <person name="Campbell D.S."/>
            <person name="Smith T.M."/>
            <person name="McCormick J.K."/>
            <person name="Leung D.Y.M."/>
            <person name="Schlievert P.M."/>
            <person name="Musser J.M."/>
        </authorList>
    </citation>
    <scope>NUCLEOTIDE SEQUENCE [LARGE SCALE GENOMIC DNA]</scope>
    <source>
        <strain>ATCC BAA-595 / MGAS315</strain>
    </source>
</reference>
<feature type="chain" id="PRO_0000113677" description="Serine hydroxymethyltransferase">
    <location>
        <begin position="1"/>
        <end position="418"/>
    </location>
</feature>
<feature type="binding site" evidence="1">
    <location>
        <position position="121"/>
    </location>
    <ligand>
        <name>(6S)-5,6,7,8-tetrahydrofolate</name>
        <dbReference type="ChEBI" id="CHEBI:57453"/>
    </ligand>
</feature>
<feature type="binding site" evidence="1">
    <location>
        <begin position="125"/>
        <end position="127"/>
    </location>
    <ligand>
        <name>(6S)-5,6,7,8-tetrahydrofolate</name>
        <dbReference type="ChEBI" id="CHEBI:57453"/>
    </ligand>
</feature>
<feature type="binding site" evidence="1">
    <location>
        <begin position="355"/>
        <end position="357"/>
    </location>
    <ligand>
        <name>(6S)-5,6,7,8-tetrahydrofolate</name>
        <dbReference type="ChEBI" id="CHEBI:57453"/>
    </ligand>
</feature>
<feature type="site" description="Plays an important role in substrate specificity" evidence="1">
    <location>
        <position position="229"/>
    </location>
</feature>
<feature type="modified residue" description="N6-(pyridoxal phosphate)lysine" evidence="1">
    <location>
        <position position="230"/>
    </location>
</feature>
<gene>
    <name evidence="1" type="primary">glyA</name>
    <name type="ordered locus">SpyM3_0803</name>
</gene>
<name>GLYA_STRP3</name>
<protein>
    <recommendedName>
        <fullName evidence="1">Serine hydroxymethyltransferase</fullName>
        <shortName evidence="1">SHMT</shortName>
        <shortName evidence="1">Serine methylase</shortName>
        <ecNumber evidence="1">2.1.2.1</ecNumber>
    </recommendedName>
</protein>
<dbReference type="EC" id="2.1.2.1" evidence="1"/>
<dbReference type="EMBL" id="AE014074">
    <property type="protein sequence ID" value="AAM79410.1"/>
    <property type="molecule type" value="Genomic_DNA"/>
</dbReference>
<dbReference type="RefSeq" id="WP_011054490.1">
    <property type="nucleotide sequence ID" value="NC_004070.1"/>
</dbReference>
<dbReference type="SMR" id="P0DF70"/>
<dbReference type="KEGG" id="spg:SpyM3_0803"/>
<dbReference type="HOGENOM" id="CLU_022477_2_1_9"/>
<dbReference type="UniPathway" id="UPA00193"/>
<dbReference type="UniPathway" id="UPA00288">
    <property type="reaction ID" value="UER01023"/>
</dbReference>
<dbReference type="Proteomes" id="UP000000564">
    <property type="component" value="Chromosome"/>
</dbReference>
<dbReference type="GO" id="GO:0005829">
    <property type="term" value="C:cytosol"/>
    <property type="evidence" value="ECO:0007669"/>
    <property type="project" value="TreeGrafter"/>
</dbReference>
<dbReference type="GO" id="GO:0004372">
    <property type="term" value="F:glycine hydroxymethyltransferase activity"/>
    <property type="evidence" value="ECO:0007669"/>
    <property type="project" value="UniProtKB-UniRule"/>
</dbReference>
<dbReference type="GO" id="GO:0030170">
    <property type="term" value="F:pyridoxal phosphate binding"/>
    <property type="evidence" value="ECO:0007669"/>
    <property type="project" value="UniProtKB-UniRule"/>
</dbReference>
<dbReference type="GO" id="GO:0019264">
    <property type="term" value="P:glycine biosynthetic process from serine"/>
    <property type="evidence" value="ECO:0007669"/>
    <property type="project" value="UniProtKB-UniRule"/>
</dbReference>
<dbReference type="GO" id="GO:0035999">
    <property type="term" value="P:tetrahydrofolate interconversion"/>
    <property type="evidence" value="ECO:0007669"/>
    <property type="project" value="UniProtKB-UniRule"/>
</dbReference>
<dbReference type="CDD" id="cd00378">
    <property type="entry name" value="SHMT"/>
    <property type="match status" value="1"/>
</dbReference>
<dbReference type="FunFam" id="3.40.640.10:FF:000001">
    <property type="entry name" value="Serine hydroxymethyltransferase"/>
    <property type="match status" value="1"/>
</dbReference>
<dbReference type="Gene3D" id="3.90.1150.10">
    <property type="entry name" value="Aspartate Aminotransferase, domain 1"/>
    <property type="match status" value="1"/>
</dbReference>
<dbReference type="Gene3D" id="3.40.640.10">
    <property type="entry name" value="Type I PLP-dependent aspartate aminotransferase-like (Major domain)"/>
    <property type="match status" value="1"/>
</dbReference>
<dbReference type="HAMAP" id="MF_00051">
    <property type="entry name" value="SHMT"/>
    <property type="match status" value="1"/>
</dbReference>
<dbReference type="InterPro" id="IPR015424">
    <property type="entry name" value="PyrdxlP-dep_Trfase"/>
</dbReference>
<dbReference type="InterPro" id="IPR015421">
    <property type="entry name" value="PyrdxlP-dep_Trfase_major"/>
</dbReference>
<dbReference type="InterPro" id="IPR015422">
    <property type="entry name" value="PyrdxlP-dep_Trfase_small"/>
</dbReference>
<dbReference type="InterPro" id="IPR001085">
    <property type="entry name" value="Ser_HO-MeTrfase"/>
</dbReference>
<dbReference type="InterPro" id="IPR049943">
    <property type="entry name" value="Ser_HO-MeTrfase-like"/>
</dbReference>
<dbReference type="InterPro" id="IPR019798">
    <property type="entry name" value="Ser_HO-MeTrfase_PLP_BS"/>
</dbReference>
<dbReference type="InterPro" id="IPR039429">
    <property type="entry name" value="SHMT-like_dom"/>
</dbReference>
<dbReference type="NCBIfam" id="NF000586">
    <property type="entry name" value="PRK00011.1"/>
    <property type="match status" value="1"/>
</dbReference>
<dbReference type="PANTHER" id="PTHR11680">
    <property type="entry name" value="SERINE HYDROXYMETHYLTRANSFERASE"/>
    <property type="match status" value="1"/>
</dbReference>
<dbReference type="PANTHER" id="PTHR11680:SF35">
    <property type="entry name" value="SERINE HYDROXYMETHYLTRANSFERASE 1"/>
    <property type="match status" value="1"/>
</dbReference>
<dbReference type="Pfam" id="PF00464">
    <property type="entry name" value="SHMT"/>
    <property type="match status" value="1"/>
</dbReference>
<dbReference type="PIRSF" id="PIRSF000412">
    <property type="entry name" value="SHMT"/>
    <property type="match status" value="1"/>
</dbReference>
<dbReference type="SUPFAM" id="SSF53383">
    <property type="entry name" value="PLP-dependent transferases"/>
    <property type="match status" value="1"/>
</dbReference>
<dbReference type="PROSITE" id="PS00096">
    <property type="entry name" value="SHMT"/>
    <property type="match status" value="1"/>
</dbReference>
<organism>
    <name type="scientific">Streptococcus pyogenes serotype M3 (strain ATCC BAA-595 / MGAS315)</name>
    <dbReference type="NCBI Taxonomy" id="198466"/>
    <lineage>
        <taxon>Bacteria</taxon>
        <taxon>Bacillati</taxon>
        <taxon>Bacillota</taxon>
        <taxon>Bacilli</taxon>
        <taxon>Lactobacillales</taxon>
        <taxon>Streptococcaceae</taxon>
        <taxon>Streptococcus</taxon>
    </lineage>
</organism>
<sequence length="418" mass="45079">MIFDKGNVEDFDKELWDAIHAEEERQEHHIELIASENMVSKAVMAAQGSVLTNKYAEGYPGNRYYGGTECVDIVETLAIERAKKLFGAAFANVQAHSGSQANAAAYMALIEAGDTVLGMDLAAGGHLTHGSPVNFSGKTYHFVGYSVDADTEMLNYEAILEQAKAVQPKLIVAGASAYSRNIDFEKFRAIADHVGAYLMVDMAHIAGLVAAGVHPSPVPYAHIVTSTTHKTLRGPRGGLILTNDEALAKKINSAVFPGLQGGPLEHVIAAKAVAFKEALDPAFKDYAQAIIDNTAAMAAVFAQDDRFRLISGGTDNHVFLVDVTKVIANGKLAQNLLDEVNITLNKNAIPFETLSPFNTSGIRIGCAAITSRGMGVKESQTIARLIIKALVNHDQETILEEVRQEVRQLTDAFPLYKK</sequence>
<comment type="function">
    <text evidence="1">Catalyzes the reversible interconversion of serine and glycine with tetrahydrofolate (THF) serving as the one-carbon carrier. This reaction serves as the major source of one-carbon groups required for the biosynthesis of purines, thymidylate, methionine, and other important biomolecules. Also exhibits THF-independent aldolase activity toward beta-hydroxyamino acids, producing glycine and aldehydes, via a retro-aldol mechanism.</text>
</comment>
<comment type="catalytic activity">
    <reaction evidence="1">
        <text>(6R)-5,10-methylene-5,6,7,8-tetrahydrofolate + glycine + H2O = (6S)-5,6,7,8-tetrahydrofolate + L-serine</text>
        <dbReference type="Rhea" id="RHEA:15481"/>
        <dbReference type="ChEBI" id="CHEBI:15377"/>
        <dbReference type="ChEBI" id="CHEBI:15636"/>
        <dbReference type="ChEBI" id="CHEBI:33384"/>
        <dbReference type="ChEBI" id="CHEBI:57305"/>
        <dbReference type="ChEBI" id="CHEBI:57453"/>
        <dbReference type="EC" id="2.1.2.1"/>
    </reaction>
</comment>
<comment type="cofactor">
    <cofactor evidence="1">
        <name>pyridoxal 5'-phosphate</name>
        <dbReference type="ChEBI" id="CHEBI:597326"/>
    </cofactor>
</comment>
<comment type="pathway">
    <text evidence="1">One-carbon metabolism; tetrahydrofolate interconversion.</text>
</comment>
<comment type="pathway">
    <text evidence="1">Amino-acid biosynthesis; glycine biosynthesis; glycine from L-serine: step 1/1.</text>
</comment>
<comment type="subunit">
    <text evidence="1">Homodimer.</text>
</comment>
<comment type="subcellular location">
    <subcellularLocation>
        <location evidence="1">Cytoplasm</location>
    </subcellularLocation>
</comment>
<comment type="similarity">
    <text evidence="1">Belongs to the SHMT family.</text>
</comment>
<keyword id="KW-0028">Amino-acid biosynthesis</keyword>
<keyword id="KW-0963">Cytoplasm</keyword>
<keyword id="KW-0554">One-carbon metabolism</keyword>
<keyword id="KW-0663">Pyridoxal phosphate</keyword>
<keyword id="KW-0808">Transferase</keyword>
<proteinExistence type="inferred from homology"/>
<accession>P0DF70</accession>
<accession>Q8K7H8</accession>
<evidence type="ECO:0000255" key="1">
    <source>
        <dbReference type="HAMAP-Rule" id="MF_00051"/>
    </source>
</evidence>